<feature type="chain" id="PRO_0000097279" description="Replication factor A protein 3">
    <location>
        <begin position="1"/>
        <end position="122"/>
    </location>
</feature>
<sequence>MASETPRVDPTEISNVNAPVFRIIAQIKSQPTESQLILQSPTISSKNGSEVEMITLNNIRVSMNKTFEIDSWYEFVCRNNDDGELGFLILDAVLCKFKENEDLSLNGVVALQRLCKKYPEIY</sequence>
<accession>P26755</accession>
<accession>D6VW15</accession>
<gene>
    <name type="primary">RFA3</name>
    <name type="ordered locus">YJL173C</name>
    <name type="ORF">J0506</name>
</gene>
<organism>
    <name type="scientific">Saccharomyces cerevisiae (strain ATCC 204508 / S288c)</name>
    <name type="common">Baker's yeast</name>
    <dbReference type="NCBI Taxonomy" id="559292"/>
    <lineage>
        <taxon>Eukaryota</taxon>
        <taxon>Fungi</taxon>
        <taxon>Dikarya</taxon>
        <taxon>Ascomycota</taxon>
        <taxon>Saccharomycotina</taxon>
        <taxon>Saccharomycetes</taxon>
        <taxon>Saccharomycetales</taxon>
        <taxon>Saccharomycetaceae</taxon>
        <taxon>Saccharomyces</taxon>
    </lineage>
</organism>
<keyword id="KW-0002">3D-structure</keyword>
<keyword id="KW-0903">Direct protein sequencing</keyword>
<keyword id="KW-0235">DNA replication</keyword>
<keyword id="KW-0539">Nucleus</keyword>
<keyword id="KW-1185">Reference proteome</keyword>
<dbReference type="EMBL" id="X59750">
    <property type="protein sequence ID" value="CAA42422.1"/>
    <property type="molecule type" value="Genomic_DNA"/>
</dbReference>
<dbReference type="EMBL" id="X56792">
    <property type="protein sequence ID" value="CAA40110.1"/>
    <property type="molecule type" value="Genomic_DNA"/>
</dbReference>
<dbReference type="EMBL" id="Z49448">
    <property type="protein sequence ID" value="CAA89468.1"/>
    <property type="molecule type" value="Genomic_DNA"/>
</dbReference>
<dbReference type="EMBL" id="AY558541">
    <property type="protein sequence ID" value="AAS56867.1"/>
    <property type="molecule type" value="Genomic_DNA"/>
</dbReference>
<dbReference type="EMBL" id="BK006943">
    <property type="protein sequence ID" value="DAA08631.1"/>
    <property type="molecule type" value="Genomic_DNA"/>
</dbReference>
<dbReference type="PIR" id="C37281">
    <property type="entry name" value="C37281"/>
</dbReference>
<dbReference type="RefSeq" id="NP_012362.1">
    <property type="nucleotide sequence ID" value="NM_001181606.1"/>
</dbReference>
<dbReference type="PDB" id="6I52">
    <property type="method" value="EM"/>
    <property type="resolution" value="4.70 A"/>
    <property type="chains" value="A=1-122"/>
</dbReference>
<dbReference type="PDBsum" id="6I52"/>
<dbReference type="EMDB" id="EMD-4410"/>
<dbReference type="SMR" id="P26755"/>
<dbReference type="BioGRID" id="33587">
    <property type="interactions" value="180"/>
</dbReference>
<dbReference type="ComplexPortal" id="CPX-21">
    <property type="entry name" value="Replication protein A complex"/>
</dbReference>
<dbReference type="DIP" id="DIP-2109N"/>
<dbReference type="FunCoup" id="P26755">
    <property type="interactions" value="187"/>
</dbReference>
<dbReference type="IntAct" id="P26755">
    <property type="interactions" value="52"/>
</dbReference>
<dbReference type="MINT" id="P26755"/>
<dbReference type="STRING" id="4932.YJL173C"/>
<dbReference type="iPTMnet" id="P26755"/>
<dbReference type="PaxDb" id="4932-YJL173C"/>
<dbReference type="PeptideAtlas" id="P26755"/>
<dbReference type="EnsemblFungi" id="YJL173C_mRNA">
    <property type="protein sequence ID" value="YJL173C"/>
    <property type="gene ID" value="YJL173C"/>
</dbReference>
<dbReference type="GeneID" id="853266"/>
<dbReference type="KEGG" id="sce:YJL173C"/>
<dbReference type="AGR" id="SGD:S000003709"/>
<dbReference type="SGD" id="S000003709">
    <property type="gene designation" value="RFA3"/>
</dbReference>
<dbReference type="VEuPathDB" id="FungiDB:YJL173C"/>
<dbReference type="eggNOG" id="ENOG502S18S">
    <property type="taxonomic scope" value="Eukaryota"/>
</dbReference>
<dbReference type="HOGENOM" id="CLU_2098758_0_0_1"/>
<dbReference type="InParanoid" id="P26755"/>
<dbReference type="OMA" id="FRIIGQV"/>
<dbReference type="OrthoDB" id="4040097at2759"/>
<dbReference type="BioCyc" id="YEAST:G3O-31609-MONOMER"/>
<dbReference type="BioGRID-ORCS" id="853266">
    <property type="hits" value="0 hits in 10 CRISPR screens"/>
</dbReference>
<dbReference type="PRO" id="PR:P26755"/>
<dbReference type="Proteomes" id="UP000002311">
    <property type="component" value="Chromosome X"/>
</dbReference>
<dbReference type="RNAct" id="P26755">
    <property type="molecule type" value="protein"/>
</dbReference>
<dbReference type="GO" id="GO:0000781">
    <property type="term" value="C:chromosome, telomeric region"/>
    <property type="evidence" value="ECO:0000315"/>
    <property type="project" value="SGD"/>
</dbReference>
<dbReference type="GO" id="GO:0000794">
    <property type="term" value="C:condensed nuclear chromosome"/>
    <property type="evidence" value="ECO:0000314"/>
    <property type="project" value="SGD"/>
</dbReference>
<dbReference type="GO" id="GO:0005662">
    <property type="term" value="C:DNA replication factor A complex"/>
    <property type="evidence" value="ECO:0000314"/>
    <property type="project" value="SGD"/>
</dbReference>
<dbReference type="GO" id="GO:0003690">
    <property type="term" value="F:double-stranded DNA binding"/>
    <property type="evidence" value="ECO:0000314"/>
    <property type="project" value="SGD"/>
</dbReference>
<dbReference type="GO" id="GO:0043565">
    <property type="term" value="F:sequence-specific DNA binding"/>
    <property type="evidence" value="ECO:0000314"/>
    <property type="project" value="SGD"/>
</dbReference>
<dbReference type="GO" id="GO:0006281">
    <property type="term" value="P:DNA repair"/>
    <property type="evidence" value="ECO:0000314"/>
    <property type="project" value="ComplexPortal"/>
</dbReference>
<dbReference type="GO" id="GO:0006260">
    <property type="term" value="P:DNA replication"/>
    <property type="evidence" value="ECO:0000314"/>
    <property type="project" value="ComplexPortal"/>
</dbReference>
<dbReference type="GO" id="GO:0006265">
    <property type="term" value="P:DNA topological change"/>
    <property type="evidence" value="ECO:0000314"/>
    <property type="project" value="SGD"/>
</dbReference>
<dbReference type="GO" id="GO:0000724">
    <property type="term" value="P:double-strand break repair via homologous recombination"/>
    <property type="evidence" value="ECO:0000316"/>
    <property type="project" value="SGD"/>
</dbReference>
<dbReference type="GO" id="GO:0045184">
    <property type="term" value="P:establishment of protein localization"/>
    <property type="evidence" value="ECO:0000353"/>
    <property type="project" value="SGD"/>
</dbReference>
<dbReference type="GO" id="GO:0030491">
    <property type="term" value="P:heteroduplex formation"/>
    <property type="evidence" value="ECO:0000314"/>
    <property type="project" value="SGD"/>
</dbReference>
<dbReference type="GO" id="GO:0006312">
    <property type="term" value="P:mitotic recombination"/>
    <property type="evidence" value="ECO:0000353"/>
    <property type="project" value="ComplexPortal"/>
</dbReference>
<dbReference type="GO" id="GO:0006289">
    <property type="term" value="P:nucleotide-excision repair"/>
    <property type="evidence" value="ECO:0000314"/>
    <property type="project" value="SGD"/>
</dbReference>
<dbReference type="GO" id="GO:0016567">
    <property type="term" value="P:protein ubiquitination"/>
    <property type="evidence" value="ECO:0000353"/>
    <property type="project" value="SGD"/>
</dbReference>
<dbReference type="GO" id="GO:0007131">
    <property type="term" value="P:reciprocal meiotic recombination"/>
    <property type="evidence" value="ECO:0000353"/>
    <property type="project" value="SGD"/>
</dbReference>
<dbReference type="GO" id="GO:0000723">
    <property type="term" value="P:telomere maintenance"/>
    <property type="evidence" value="ECO:0000303"/>
    <property type="project" value="ComplexPortal"/>
</dbReference>
<dbReference type="GO" id="GO:0000722">
    <property type="term" value="P:telomere maintenance via recombination"/>
    <property type="evidence" value="ECO:0000353"/>
    <property type="project" value="SGD"/>
</dbReference>
<dbReference type="GO" id="GO:0007004">
    <property type="term" value="P:telomere maintenance via telomerase"/>
    <property type="evidence" value="ECO:0000353"/>
    <property type="project" value="SGD"/>
</dbReference>
<dbReference type="GO" id="GO:0010833">
    <property type="term" value="P:telomere maintenance via telomere lengthening"/>
    <property type="evidence" value="ECO:0000315"/>
    <property type="project" value="SGD"/>
</dbReference>
<dbReference type="InterPro" id="IPR013970">
    <property type="entry name" value="Rfa2"/>
</dbReference>
<dbReference type="InterPro" id="IPR016588">
    <property type="entry name" value="Rfp3_Saccharomycetes"/>
</dbReference>
<dbReference type="Pfam" id="PF08661">
    <property type="entry name" value="Rep_fac-A_3"/>
    <property type="match status" value="1"/>
</dbReference>
<dbReference type="PIRSF" id="PIRSF011773">
    <property type="entry name" value="Rep_factor-A_4"/>
    <property type="match status" value="1"/>
</dbReference>
<reference key="1">
    <citation type="journal article" date="1991" name="Genes Dev.">
        <title>Replication factor-A from Saccharomyces cerevisiae is encoded by three essential genes coordinately expressed at S phase.</title>
        <authorList>
            <person name="Brill S.J."/>
            <person name="Stillman B."/>
        </authorList>
    </citation>
    <scope>NUCLEOTIDE SEQUENCE [GENOMIC DNA]</scope>
    <scope>PROTEIN SEQUENCE OF 8-22; 29-46 AND 119-122</scope>
    <source>
        <strain>ATCC 208353 / W303-1A</strain>
    </source>
</reference>
<reference key="2">
    <citation type="journal article" date="1993" name="Curr. Genet.">
        <title>Isolation of the TYE2 gene reveals its identity to SWI3 encoding a general transcription factor in Saccharomyces cerevisiae.</title>
        <authorList>
            <person name="Loehning C."/>
            <person name="Rosenbaum C."/>
            <person name="Ciriacy M."/>
        </authorList>
    </citation>
    <scope>NUCLEOTIDE SEQUENCE [GENOMIC DNA]</scope>
</reference>
<reference key="3">
    <citation type="journal article" date="1996" name="EMBO J.">
        <title>Complete nucleotide sequence of Saccharomyces cerevisiae chromosome X.</title>
        <authorList>
            <person name="Galibert F."/>
            <person name="Alexandraki D."/>
            <person name="Baur A."/>
            <person name="Boles E."/>
            <person name="Chalwatzis N."/>
            <person name="Chuat J.-C."/>
            <person name="Coster F."/>
            <person name="Cziepluch C."/>
            <person name="de Haan M."/>
            <person name="Domdey H."/>
            <person name="Durand P."/>
            <person name="Entian K.-D."/>
            <person name="Gatius M."/>
            <person name="Goffeau A."/>
            <person name="Grivell L.A."/>
            <person name="Hennemann A."/>
            <person name="Herbert C.J."/>
            <person name="Heumann K."/>
            <person name="Hilger F."/>
            <person name="Hollenberg C.P."/>
            <person name="Huang M.-E."/>
            <person name="Jacq C."/>
            <person name="Jauniaux J.-C."/>
            <person name="Katsoulou C."/>
            <person name="Kirchrath L."/>
            <person name="Kleine K."/>
            <person name="Kordes E."/>
            <person name="Koetter P."/>
            <person name="Liebl S."/>
            <person name="Louis E.J."/>
            <person name="Manus V."/>
            <person name="Mewes H.-W."/>
            <person name="Miosga T."/>
            <person name="Obermaier B."/>
            <person name="Perea J."/>
            <person name="Pohl T.M."/>
            <person name="Portetelle D."/>
            <person name="Pujol A."/>
            <person name="Purnelle B."/>
            <person name="Ramezani Rad M."/>
            <person name="Rasmussen S.W."/>
            <person name="Rose M."/>
            <person name="Rossau R."/>
            <person name="Schaaff-Gerstenschlaeger I."/>
            <person name="Smits P.H.M."/>
            <person name="Scarcez T."/>
            <person name="Soriano N."/>
            <person name="To Van D."/>
            <person name="Tzermia M."/>
            <person name="Van Broekhoven A."/>
            <person name="Vandenbol M."/>
            <person name="Wedler H."/>
            <person name="von Wettstein D."/>
            <person name="Wambutt R."/>
            <person name="Zagulski M."/>
            <person name="Zollner A."/>
            <person name="Karpfinger-Hartl L."/>
        </authorList>
    </citation>
    <scope>NUCLEOTIDE SEQUENCE [LARGE SCALE GENOMIC DNA]</scope>
    <source>
        <strain>ATCC 204508 / S288c</strain>
    </source>
</reference>
<reference key="4">
    <citation type="journal article" date="2014" name="G3 (Bethesda)">
        <title>The reference genome sequence of Saccharomyces cerevisiae: Then and now.</title>
        <authorList>
            <person name="Engel S.R."/>
            <person name="Dietrich F.S."/>
            <person name="Fisk D.G."/>
            <person name="Binkley G."/>
            <person name="Balakrishnan R."/>
            <person name="Costanzo M.C."/>
            <person name="Dwight S.S."/>
            <person name="Hitz B.C."/>
            <person name="Karra K."/>
            <person name="Nash R.S."/>
            <person name="Weng S."/>
            <person name="Wong E.D."/>
            <person name="Lloyd P."/>
            <person name="Skrzypek M.S."/>
            <person name="Miyasato S.R."/>
            <person name="Simison M."/>
            <person name="Cherry J.M."/>
        </authorList>
    </citation>
    <scope>GENOME REANNOTATION</scope>
    <source>
        <strain>ATCC 204508 / S288c</strain>
    </source>
</reference>
<reference key="5">
    <citation type="journal article" date="2007" name="Genome Res.">
        <title>Approaching a complete repository of sequence-verified protein-encoding clones for Saccharomyces cerevisiae.</title>
        <authorList>
            <person name="Hu Y."/>
            <person name="Rolfs A."/>
            <person name="Bhullar B."/>
            <person name="Murthy T.V.S."/>
            <person name="Zhu C."/>
            <person name="Berger M.F."/>
            <person name="Camargo A.A."/>
            <person name="Kelley F."/>
            <person name="McCarron S."/>
            <person name="Jepson D."/>
            <person name="Richardson A."/>
            <person name="Raphael J."/>
            <person name="Moreira D."/>
            <person name="Taycher E."/>
            <person name="Zuo D."/>
            <person name="Mohr S."/>
            <person name="Kane M.F."/>
            <person name="Williamson J."/>
            <person name="Simpson A.J.G."/>
            <person name="Bulyk M.L."/>
            <person name="Harlow E."/>
            <person name="Marsischky G."/>
            <person name="Kolodner R.D."/>
            <person name="LaBaer J."/>
        </authorList>
    </citation>
    <scope>NUCLEOTIDE SEQUENCE [GENOMIC DNA]</scope>
    <source>
        <strain>ATCC 204508 / S288c</strain>
    </source>
</reference>
<reference key="6">
    <citation type="journal article" date="2003" name="Nature">
        <title>Global analysis of protein expression in yeast.</title>
        <authorList>
            <person name="Ghaemmaghami S."/>
            <person name="Huh W.-K."/>
            <person name="Bower K."/>
            <person name="Howson R.W."/>
            <person name="Belle A."/>
            <person name="Dephoure N."/>
            <person name="O'Shea E.K."/>
            <person name="Weissman J.S."/>
        </authorList>
    </citation>
    <scope>LEVEL OF PROTEIN EXPRESSION [LARGE SCALE ANALYSIS]</scope>
</reference>
<protein>
    <recommendedName>
        <fullName>Replication factor A protein 3</fullName>
        <shortName>RF-A</shortName>
    </recommendedName>
    <alternativeName>
        <fullName>Replication protein A 13 kDa subunit</fullName>
    </alternativeName>
</protein>
<evidence type="ECO:0000250" key="1"/>
<evidence type="ECO:0000269" key="2">
    <source>
    </source>
</evidence>
<evidence type="ECO:0000305" key="3"/>
<comment type="function">
    <text evidence="1">As part of the replication protein A (RPA/RP-A), a single-stranded DNA-binding heterotrimeric complex, may play an essential role in DNA replication, recombination and repair. Binds and stabilizes single-stranded DNA intermediates, preventing complementary DNA reannealing and recruiting different proteins involved in DNA metabolism (By similarity). Stimulates the activity of a cognate strand exchange protein (SEP1).</text>
</comment>
<comment type="subunit">
    <text evidence="1">Component of the heterotrimeric canonical replication protein A complex (RPA).</text>
</comment>
<comment type="interaction">
    <interactant intactId="EBI-14981">
        <id>P26755</id>
    </interactant>
    <interactant intactId="EBI-14971">
        <id>P22336</id>
        <label>RFA1</label>
    </interactant>
    <organismsDiffer>false</organismsDiffer>
    <experiments>5</experiments>
</comment>
<comment type="interaction">
    <interactant intactId="EBI-14981">
        <id>P26755</id>
    </interactant>
    <interactant intactId="EBI-14976">
        <id>P26754</id>
        <label>RFA2</label>
    </interactant>
    <organismsDiffer>false</organismsDiffer>
    <experiments>3</experiments>
</comment>
<comment type="subcellular location">
    <subcellularLocation>
        <location>Nucleus</location>
    </subcellularLocation>
</comment>
<comment type="PTM">
    <text>The N-terminus is blocked.</text>
</comment>
<comment type="miscellaneous">
    <text evidence="2">Present with 4280 molecules/cell in log phase SD medium.</text>
</comment>
<comment type="similarity">
    <text evidence="3">Belongs to the replication factor A protein 3 family.</text>
</comment>
<name>RFA3_YEAST</name>
<proteinExistence type="evidence at protein level"/>